<feature type="chain" id="PRO_1000094421" description="Shikimate kinase">
    <location>
        <begin position="1"/>
        <end position="163"/>
    </location>
</feature>
<feature type="binding site" evidence="1">
    <location>
        <begin position="10"/>
        <end position="15"/>
    </location>
    <ligand>
        <name>ATP</name>
        <dbReference type="ChEBI" id="CHEBI:30616"/>
    </ligand>
</feature>
<feature type="binding site" evidence="1">
    <location>
        <position position="14"/>
    </location>
    <ligand>
        <name>Mg(2+)</name>
        <dbReference type="ChEBI" id="CHEBI:18420"/>
    </ligand>
</feature>
<feature type="binding site" evidence="1">
    <location>
        <position position="28"/>
    </location>
    <ligand>
        <name>substrate</name>
    </ligand>
</feature>
<feature type="binding site" evidence="1">
    <location>
        <position position="52"/>
    </location>
    <ligand>
        <name>substrate</name>
    </ligand>
</feature>
<feature type="binding site" evidence="1">
    <location>
        <position position="75"/>
    </location>
    <ligand>
        <name>substrate</name>
    </ligand>
</feature>
<feature type="binding site" evidence="1">
    <location>
        <position position="116"/>
    </location>
    <ligand>
        <name>ATP</name>
        <dbReference type="ChEBI" id="CHEBI:30616"/>
    </ligand>
</feature>
<feature type="binding site" evidence="1">
    <location>
        <position position="134"/>
    </location>
    <ligand>
        <name>substrate</name>
    </ligand>
</feature>
<feature type="binding site" evidence="1">
    <location>
        <position position="151"/>
    </location>
    <ligand>
        <name>ATP</name>
        <dbReference type="ChEBI" id="CHEBI:30616"/>
    </ligand>
</feature>
<evidence type="ECO:0000255" key="1">
    <source>
        <dbReference type="HAMAP-Rule" id="MF_00109"/>
    </source>
</evidence>
<accession>Q1JGC2</accession>
<organism>
    <name type="scientific">Streptococcus pyogenes serotype M2 (strain MGAS10270)</name>
    <dbReference type="NCBI Taxonomy" id="370552"/>
    <lineage>
        <taxon>Bacteria</taxon>
        <taxon>Bacillati</taxon>
        <taxon>Bacillota</taxon>
        <taxon>Bacilli</taxon>
        <taxon>Lactobacillales</taxon>
        <taxon>Streptococcaceae</taxon>
        <taxon>Streptococcus</taxon>
    </lineage>
</organism>
<gene>
    <name evidence="1" type="primary">aroK</name>
    <name type="ordered locus">MGAS10270_Spy1157</name>
</gene>
<comment type="function">
    <text evidence="1">Catalyzes the specific phosphorylation of the 3-hydroxyl group of shikimic acid using ATP as a cosubstrate.</text>
</comment>
<comment type="catalytic activity">
    <reaction evidence="1">
        <text>shikimate + ATP = 3-phosphoshikimate + ADP + H(+)</text>
        <dbReference type="Rhea" id="RHEA:13121"/>
        <dbReference type="ChEBI" id="CHEBI:15378"/>
        <dbReference type="ChEBI" id="CHEBI:30616"/>
        <dbReference type="ChEBI" id="CHEBI:36208"/>
        <dbReference type="ChEBI" id="CHEBI:145989"/>
        <dbReference type="ChEBI" id="CHEBI:456216"/>
        <dbReference type="EC" id="2.7.1.71"/>
    </reaction>
</comment>
<comment type="cofactor">
    <cofactor evidence="1">
        <name>Mg(2+)</name>
        <dbReference type="ChEBI" id="CHEBI:18420"/>
    </cofactor>
    <text evidence="1">Binds 1 Mg(2+) ion per subunit.</text>
</comment>
<comment type="pathway">
    <text evidence="1">Metabolic intermediate biosynthesis; chorismate biosynthesis; chorismate from D-erythrose 4-phosphate and phosphoenolpyruvate: step 5/7.</text>
</comment>
<comment type="subunit">
    <text evidence="1">Monomer.</text>
</comment>
<comment type="subcellular location">
    <subcellularLocation>
        <location evidence="1">Cytoplasm</location>
    </subcellularLocation>
</comment>
<comment type="similarity">
    <text evidence="1">Belongs to the shikimate kinase family.</text>
</comment>
<reference key="1">
    <citation type="journal article" date="2006" name="Proc. Natl. Acad. Sci. U.S.A.">
        <title>Molecular genetic anatomy of inter- and intraserotype variation in the human bacterial pathogen group A Streptococcus.</title>
        <authorList>
            <person name="Beres S.B."/>
            <person name="Richter E.W."/>
            <person name="Nagiec M.J."/>
            <person name="Sumby P."/>
            <person name="Porcella S.F."/>
            <person name="DeLeo F.R."/>
            <person name="Musser J.M."/>
        </authorList>
    </citation>
    <scope>NUCLEOTIDE SEQUENCE [LARGE SCALE GENOMIC DNA]</scope>
    <source>
        <strain>MGAS10270</strain>
    </source>
</reference>
<name>AROK_STRPD</name>
<sequence length="163" mass="18752">MTKVLLGFMGVGKTTVSKHLSMHCKDMDAIIEAKIGMSIAAFFEQHGEIAFRTIESQVLKDLLFANDNSVIVTGGGVVVLQENRQLLRKNHQHNILLVASFETLYQRLKHDKKSQRPLFLKYSKEAFYEFYQQRMVFYEGLSDLVIRVDHRTPEEVANIIEGY</sequence>
<protein>
    <recommendedName>
        <fullName evidence="1">Shikimate kinase</fullName>
        <shortName evidence="1">SK</shortName>
        <ecNumber evidence="1">2.7.1.71</ecNumber>
    </recommendedName>
</protein>
<proteinExistence type="inferred from homology"/>
<keyword id="KW-0028">Amino-acid biosynthesis</keyword>
<keyword id="KW-0057">Aromatic amino acid biosynthesis</keyword>
<keyword id="KW-0067">ATP-binding</keyword>
<keyword id="KW-0963">Cytoplasm</keyword>
<keyword id="KW-0418">Kinase</keyword>
<keyword id="KW-0460">Magnesium</keyword>
<keyword id="KW-0479">Metal-binding</keyword>
<keyword id="KW-0547">Nucleotide-binding</keyword>
<keyword id="KW-0808">Transferase</keyword>
<dbReference type="EC" id="2.7.1.71" evidence="1"/>
<dbReference type="EMBL" id="CP000260">
    <property type="protein sequence ID" value="ABF34222.1"/>
    <property type="molecule type" value="Genomic_DNA"/>
</dbReference>
<dbReference type="RefSeq" id="WP_002989310.1">
    <property type="nucleotide sequence ID" value="NZ_CVUH01000007.1"/>
</dbReference>
<dbReference type="SMR" id="Q1JGC2"/>
<dbReference type="KEGG" id="sph:MGAS10270_Spy1157"/>
<dbReference type="HOGENOM" id="CLU_057607_4_3_9"/>
<dbReference type="UniPathway" id="UPA00053">
    <property type="reaction ID" value="UER00088"/>
</dbReference>
<dbReference type="Proteomes" id="UP000002436">
    <property type="component" value="Chromosome"/>
</dbReference>
<dbReference type="GO" id="GO:0005829">
    <property type="term" value="C:cytosol"/>
    <property type="evidence" value="ECO:0007669"/>
    <property type="project" value="TreeGrafter"/>
</dbReference>
<dbReference type="GO" id="GO:0005524">
    <property type="term" value="F:ATP binding"/>
    <property type="evidence" value="ECO:0007669"/>
    <property type="project" value="UniProtKB-UniRule"/>
</dbReference>
<dbReference type="GO" id="GO:0000287">
    <property type="term" value="F:magnesium ion binding"/>
    <property type="evidence" value="ECO:0007669"/>
    <property type="project" value="UniProtKB-UniRule"/>
</dbReference>
<dbReference type="GO" id="GO:0004765">
    <property type="term" value="F:shikimate kinase activity"/>
    <property type="evidence" value="ECO:0007669"/>
    <property type="project" value="UniProtKB-UniRule"/>
</dbReference>
<dbReference type="GO" id="GO:0008652">
    <property type="term" value="P:amino acid biosynthetic process"/>
    <property type="evidence" value="ECO:0007669"/>
    <property type="project" value="UniProtKB-KW"/>
</dbReference>
<dbReference type="GO" id="GO:0009073">
    <property type="term" value="P:aromatic amino acid family biosynthetic process"/>
    <property type="evidence" value="ECO:0007669"/>
    <property type="project" value="UniProtKB-KW"/>
</dbReference>
<dbReference type="GO" id="GO:0009423">
    <property type="term" value="P:chorismate biosynthetic process"/>
    <property type="evidence" value="ECO:0007669"/>
    <property type="project" value="UniProtKB-UniRule"/>
</dbReference>
<dbReference type="CDD" id="cd00464">
    <property type="entry name" value="SK"/>
    <property type="match status" value="1"/>
</dbReference>
<dbReference type="Gene3D" id="3.40.50.300">
    <property type="entry name" value="P-loop containing nucleotide triphosphate hydrolases"/>
    <property type="match status" value="1"/>
</dbReference>
<dbReference type="HAMAP" id="MF_00109">
    <property type="entry name" value="Shikimate_kinase"/>
    <property type="match status" value="1"/>
</dbReference>
<dbReference type="InterPro" id="IPR027417">
    <property type="entry name" value="P-loop_NTPase"/>
</dbReference>
<dbReference type="InterPro" id="IPR031322">
    <property type="entry name" value="Shikimate/glucono_kinase"/>
</dbReference>
<dbReference type="InterPro" id="IPR000623">
    <property type="entry name" value="Shikimate_kinase/TSH1"/>
</dbReference>
<dbReference type="PANTHER" id="PTHR21087">
    <property type="entry name" value="SHIKIMATE KINASE"/>
    <property type="match status" value="1"/>
</dbReference>
<dbReference type="PANTHER" id="PTHR21087:SF16">
    <property type="entry name" value="SHIKIMATE KINASE 1, CHLOROPLASTIC"/>
    <property type="match status" value="1"/>
</dbReference>
<dbReference type="Pfam" id="PF01202">
    <property type="entry name" value="SKI"/>
    <property type="match status" value="1"/>
</dbReference>
<dbReference type="PRINTS" id="PR01100">
    <property type="entry name" value="SHIKIMTKNASE"/>
</dbReference>
<dbReference type="SUPFAM" id="SSF52540">
    <property type="entry name" value="P-loop containing nucleoside triphosphate hydrolases"/>
    <property type="match status" value="1"/>
</dbReference>